<accession>A6Q584</accession>
<keyword id="KW-0963">Cytoplasm</keyword>
<keyword id="KW-0251">Elongation factor</keyword>
<keyword id="KW-0648">Protein biosynthesis</keyword>
<keyword id="KW-1185">Reference proteome</keyword>
<protein>
    <recommendedName>
        <fullName evidence="1">Elongation factor Ts</fullName>
        <shortName evidence="1">EF-Ts</shortName>
    </recommendedName>
</protein>
<evidence type="ECO:0000255" key="1">
    <source>
        <dbReference type="HAMAP-Rule" id="MF_00050"/>
    </source>
</evidence>
<proteinExistence type="inferred from homology"/>
<sequence length="305" mass="33247">MAISAAQVKELRERTGAGMMDCKKALQEANGDMDKAIEILRKKGIAKAAKKADRVASEGTIAVQVSEDYKCATIVEVNSETDFVAQNENFKSLVEKVKGHIAQSAVESVEELYKTPIDNVIFEEYMKAEIAKIGENIVVRRFDKICVEGPGVVNGYLHMGGKIGVIVAASCDKEDVCASLKDLLKDVAMHIAAMNPRYLDEASIPAEVIEKEKEIAAAQLEKEGKPANIIEKIIPGKIKKFVEENTLLGQKFVKDDKKSVKQVIDEAAKAAGGSAKIIGFIRYELGEGIEKKEEDFAAEVAAQMK</sequence>
<feature type="chain" id="PRO_1000006138" description="Elongation factor Ts">
    <location>
        <begin position="1"/>
        <end position="305"/>
    </location>
</feature>
<feature type="region of interest" description="Involved in Mg(2+) ion dislocation from EF-Tu" evidence="1">
    <location>
        <begin position="81"/>
        <end position="84"/>
    </location>
</feature>
<gene>
    <name evidence="1" type="primary">tsf</name>
    <name type="ordered locus">NIS_1536</name>
</gene>
<name>EFTS_NITSB</name>
<organism>
    <name type="scientific">Nitratiruptor sp. (strain SB155-2)</name>
    <dbReference type="NCBI Taxonomy" id="387092"/>
    <lineage>
        <taxon>Bacteria</taxon>
        <taxon>Pseudomonadati</taxon>
        <taxon>Campylobacterota</taxon>
        <taxon>Epsilonproteobacteria</taxon>
        <taxon>Nautiliales</taxon>
        <taxon>Nitratiruptoraceae</taxon>
        <taxon>Nitratiruptor</taxon>
    </lineage>
</organism>
<dbReference type="EMBL" id="AP009178">
    <property type="protein sequence ID" value="BAF70643.1"/>
    <property type="molecule type" value="Genomic_DNA"/>
</dbReference>
<dbReference type="RefSeq" id="WP_012082906.1">
    <property type="nucleotide sequence ID" value="NC_009662.1"/>
</dbReference>
<dbReference type="SMR" id="A6Q584"/>
<dbReference type="FunCoup" id="A6Q584">
    <property type="interactions" value="470"/>
</dbReference>
<dbReference type="STRING" id="387092.NIS_1536"/>
<dbReference type="KEGG" id="nis:NIS_1536"/>
<dbReference type="eggNOG" id="COG0264">
    <property type="taxonomic scope" value="Bacteria"/>
</dbReference>
<dbReference type="HOGENOM" id="CLU_047155_0_0_7"/>
<dbReference type="InParanoid" id="A6Q584"/>
<dbReference type="OrthoDB" id="9808348at2"/>
<dbReference type="Proteomes" id="UP000001118">
    <property type="component" value="Chromosome"/>
</dbReference>
<dbReference type="GO" id="GO:0005737">
    <property type="term" value="C:cytoplasm"/>
    <property type="evidence" value="ECO:0007669"/>
    <property type="project" value="UniProtKB-SubCell"/>
</dbReference>
<dbReference type="GO" id="GO:0003746">
    <property type="term" value="F:translation elongation factor activity"/>
    <property type="evidence" value="ECO:0007669"/>
    <property type="project" value="UniProtKB-UniRule"/>
</dbReference>
<dbReference type="CDD" id="cd14275">
    <property type="entry name" value="UBA_EF-Ts"/>
    <property type="match status" value="1"/>
</dbReference>
<dbReference type="FunFam" id="1.10.286.20:FF:000001">
    <property type="entry name" value="Elongation factor Ts"/>
    <property type="match status" value="1"/>
</dbReference>
<dbReference type="FunFam" id="1.10.8.10:FF:000001">
    <property type="entry name" value="Elongation factor Ts"/>
    <property type="match status" value="1"/>
</dbReference>
<dbReference type="Gene3D" id="1.10.286.20">
    <property type="match status" value="1"/>
</dbReference>
<dbReference type="Gene3D" id="1.10.8.10">
    <property type="entry name" value="DNA helicase RuvA subunit, C-terminal domain"/>
    <property type="match status" value="1"/>
</dbReference>
<dbReference type="Gene3D" id="3.30.479.20">
    <property type="entry name" value="Elongation factor Ts, dimerisation domain"/>
    <property type="match status" value="2"/>
</dbReference>
<dbReference type="HAMAP" id="MF_00050">
    <property type="entry name" value="EF_Ts"/>
    <property type="match status" value="1"/>
</dbReference>
<dbReference type="InterPro" id="IPR036402">
    <property type="entry name" value="EF-Ts_dimer_sf"/>
</dbReference>
<dbReference type="InterPro" id="IPR001816">
    <property type="entry name" value="Transl_elong_EFTs/EF1B"/>
</dbReference>
<dbReference type="InterPro" id="IPR014039">
    <property type="entry name" value="Transl_elong_EFTs/EF1B_dimer"/>
</dbReference>
<dbReference type="InterPro" id="IPR018101">
    <property type="entry name" value="Transl_elong_Ts_CS"/>
</dbReference>
<dbReference type="InterPro" id="IPR009060">
    <property type="entry name" value="UBA-like_sf"/>
</dbReference>
<dbReference type="NCBIfam" id="TIGR00116">
    <property type="entry name" value="tsf"/>
    <property type="match status" value="1"/>
</dbReference>
<dbReference type="PANTHER" id="PTHR11741">
    <property type="entry name" value="ELONGATION FACTOR TS"/>
    <property type="match status" value="1"/>
</dbReference>
<dbReference type="PANTHER" id="PTHR11741:SF0">
    <property type="entry name" value="ELONGATION FACTOR TS, MITOCHONDRIAL"/>
    <property type="match status" value="1"/>
</dbReference>
<dbReference type="Pfam" id="PF00889">
    <property type="entry name" value="EF_TS"/>
    <property type="match status" value="1"/>
</dbReference>
<dbReference type="SUPFAM" id="SSF54713">
    <property type="entry name" value="Elongation factor Ts (EF-Ts), dimerisation domain"/>
    <property type="match status" value="2"/>
</dbReference>
<dbReference type="SUPFAM" id="SSF46934">
    <property type="entry name" value="UBA-like"/>
    <property type="match status" value="1"/>
</dbReference>
<dbReference type="PROSITE" id="PS01126">
    <property type="entry name" value="EF_TS_1"/>
    <property type="match status" value="1"/>
</dbReference>
<dbReference type="PROSITE" id="PS01127">
    <property type="entry name" value="EF_TS_2"/>
    <property type="match status" value="1"/>
</dbReference>
<comment type="function">
    <text evidence="1">Associates with the EF-Tu.GDP complex and induces the exchange of GDP to GTP. It remains bound to the aminoacyl-tRNA.EF-Tu.GTP complex up to the GTP hydrolysis stage on the ribosome.</text>
</comment>
<comment type="subcellular location">
    <subcellularLocation>
        <location evidence="1">Cytoplasm</location>
    </subcellularLocation>
</comment>
<comment type="similarity">
    <text evidence="1">Belongs to the EF-Ts family.</text>
</comment>
<reference key="1">
    <citation type="journal article" date="2007" name="Proc. Natl. Acad. Sci. U.S.A.">
        <title>Deep-sea vent epsilon-proteobacterial genomes provide insights into emergence of pathogens.</title>
        <authorList>
            <person name="Nakagawa S."/>
            <person name="Takaki Y."/>
            <person name="Shimamura S."/>
            <person name="Reysenbach A.-L."/>
            <person name="Takai K."/>
            <person name="Horikoshi K."/>
        </authorList>
    </citation>
    <scope>NUCLEOTIDE SEQUENCE [LARGE SCALE GENOMIC DNA]</scope>
    <source>
        <strain>SB155-2</strain>
    </source>
</reference>